<reference key="1">
    <citation type="journal article" date="2008" name="Genome Res.">
        <title>Insights from the complete genome sequence of Mycobacterium marinum on the evolution of Mycobacterium tuberculosis.</title>
        <authorList>
            <person name="Stinear T.P."/>
            <person name="Seemann T."/>
            <person name="Harrison P.F."/>
            <person name="Jenkin G.A."/>
            <person name="Davies J.K."/>
            <person name="Johnson P.D."/>
            <person name="Abdellah Z."/>
            <person name="Arrowsmith C."/>
            <person name="Chillingworth T."/>
            <person name="Churcher C."/>
            <person name="Clarke K."/>
            <person name="Cronin A."/>
            <person name="Davis P."/>
            <person name="Goodhead I."/>
            <person name="Holroyd N."/>
            <person name="Jagels K."/>
            <person name="Lord A."/>
            <person name="Moule S."/>
            <person name="Mungall K."/>
            <person name="Norbertczak H."/>
            <person name="Quail M.A."/>
            <person name="Rabbinowitsch E."/>
            <person name="Walker D."/>
            <person name="White B."/>
            <person name="Whitehead S."/>
            <person name="Small P.L."/>
            <person name="Brosch R."/>
            <person name="Ramakrishnan L."/>
            <person name="Fischbach M.A."/>
            <person name="Parkhill J."/>
            <person name="Cole S.T."/>
        </authorList>
    </citation>
    <scope>NUCLEOTIDE SEQUENCE [LARGE SCALE GENOMIC DNA]</scope>
    <source>
        <strain>ATCC BAA-535 / M</strain>
    </source>
</reference>
<gene>
    <name evidence="1" type="primary">menD</name>
    <name type="ordered locus">MMAR_0901</name>
</gene>
<sequence length="548" mass="57351">MNPSTTQARVVVDELIRGGVRDVVLCPGSRNAPLAFALQDADRSGRIRLHVRIDERTAGFLAIGLAVGAGAPACVAMTSGTAVANLGPAVVEANYARVPLIVLSANRPYELLGTGANQTMEQLGYFGTQVRATISLGLAEDAHERLDSLNASWRSATCRVLAAAMGSRTANAGPVHFDIPLREPLVPDPEPHGAVTPPGRPEGRPWTYTPPVTFDQPLEIDLSADTVVIAGHGAGVHPNLVQLPTIAEPTAPAAPSGGNPLHPLALPLLRPRQVIMLGRPTLHRPVSALLADPEVPVFALTTGPRWPDVSGNSQATGTRAIVTGTPNPSWLDRCAQMNRHAVAAVREQLAAHPLTTGLHVAAAVAGALRPGDQLVLGASNPVRDAALVGLDTAGLRVRSNRGVAGIDGTVSTAIGAALGYERDHHGRTVALIGDLTFVHDSSGLLIGPTEPTPRQLTIVVSNDNGGGIFELLEQGDPRFSDVSSRIFGTPHDVDVGALCRAYHVENRQIEVDQLPAALDEPGSGLRVLEVKADRSSLRQLHAAIKAAL</sequence>
<comment type="function">
    <text evidence="1">Catalyzes the thiamine diphosphate-dependent decarboxylation of 2-oxoglutarate and the subsequent addition of the resulting succinic semialdehyde-thiamine pyrophosphate anion to isochorismate to yield 2-succinyl-5-enolpyruvyl-6-hydroxy-3-cyclohexene-1-carboxylate (SEPHCHC).</text>
</comment>
<comment type="catalytic activity">
    <reaction evidence="1">
        <text>isochorismate + 2-oxoglutarate + H(+) = 5-enolpyruvoyl-6-hydroxy-2-succinyl-cyclohex-3-ene-1-carboxylate + CO2</text>
        <dbReference type="Rhea" id="RHEA:25593"/>
        <dbReference type="ChEBI" id="CHEBI:15378"/>
        <dbReference type="ChEBI" id="CHEBI:16526"/>
        <dbReference type="ChEBI" id="CHEBI:16810"/>
        <dbReference type="ChEBI" id="CHEBI:29780"/>
        <dbReference type="ChEBI" id="CHEBI:58818"/>
        <dbReference type="EC" id="2.2.1.9"/>
    </reaction>
</comment>
<comment type="cofactor">
    <cofactor evidence="1">
        <name>Mg(2+)</name>
        <dbReference type="ChEBI" id="CHEBI:18420"/>
    </cofactor>
    <cofactor evidence="1">
        <name>Mn(2+)</name>
        <dbReference type="ChEBI" id="CHEBI:29035"/>
    </cofactor>
</comment>
<comment type="cofactor">
    <cofactor evidence="1">
        <name>thiamine diphosphate</name>
        <dbReference type="ChEBI" id="CHEBI:58937"/>
    </cofactor>
    <text evidence="1">Binds 1 thiamine pyrophosphate per subunit.</text>
</comment>
<comment type="pathway">
    <text evidence="1">Quinol/quinone metabolism; 1,4-dihydroxy-2-naphthoate biosynthesis; 1,4-dihydroxy-2-naphthoate from chorismate: step 2/7.</text>
</comment>
<comment type="pathway">
    <text evidence="1">Quinol/quinone metabolism; menaquinone biosynthesis.</text>
</comment>
<comment type="subunit">
    <text evidence="1">Homodimer.</text>
</comment>
<comment type="similarity">
    <text evidence="1">Belongs to the TPP enzyme family. MenD subfamily.</text>
</comment>
<accession>B2HRP6</accession>
<feature type="chain" id="PRO_1000187083" description="2-succinyl-5-enolpyruvyl-6-hydroxy-3-cyclohexene-1-carboxylate synthase">
    <location>
        <begin position="1"/>
        <end position="548"/>
    </location>
</feature>
<protein>
    <recommendedName>
        <fullName evidence="1">2-succinyl-5-enolpyruvyl-6-hydroxy-3-cyclohexene-1-carboxylate synthase</fullName>
        <shortName evidence="1">SEPHCHC synthase</shortName>
        <ecNumber evidence="1">2.2.1.9</ecNumber>
    </recommendedName>
    <alternativeName>
        <fullName evidence="1">Menaquinone biosynthesis protein MenD</fullName>
    </alternativeName>
</protein>
<dbReference type="EC" id="2.2.1.9" evidence="1"/>
<dbReference type="EMBL" id="CP000854">
    <property type="protein sequence ID" value="ACC39358.1"/>
    <property type="molecule type" value="Genomic_DNA"/>
</dbReference>
<dbReference type="RefSeq" id="WP_012392825.1">
    <property type="nucleotide sequence ID" value="NC_010612.1"/>
</dbReference>
<dbReference type="SMR" id="B2HRP6"/>
<dbReference type="STRING" id="216594.MMAR_0901"/>
<dbReference type="KEGG" id="mmi:MMAR_0901"/>
<dbReference type="eggNOG" id="COG1165">
    <property type="taxonomic scope" value="Bacteria"/>
</dbReference>
<dbReference type="HOGENOM" id="CLU_006051_4_1_11"/>
<dbReference type="OrthoDB" id="9791859at2"/>
<dbReference type="UniPathway" id="UPA00079"/>
<dbReference type="UniPathway" id="UPA01057">
    <property type="reaction ID" value="UER00164"/>
</dbReference>
<dbReference type="Proteomes" id="UP000001190">
    <property type="component" value="Chromosome"/>
</dbReference>
<dbReference type="GO" id="GO:0070204">
    <property type="term" value="F:2-succinyl-5-enolpyruvyl-6-hydroxy-3-cyclohexene-1-carboxylic-acid synthase activity"/>
    <property type="evidence" value="ECO:0007669"/>
    <property type="project" value="UniProtKB-UniRule"/>
</dbReference>
<dbReference type="GO" id="GO:0000287">
    <property type="term" value="F:magnesium ion binding"/>
    <property type="evidence" value="ECO:0007669"/>
    <property type="project" value="UniProtKB-UniRule"/>
</dbReference>
<dbReference type="GO" id="GO:0030145">
    <property type="term" value="F:manganese ion binding"/>
    <property type="evidence" value="ECO:0007669"/>
    <property type="project" value="UniProtKB-UniRule"/>
</dbReference>
<dbReference type="GO" id="GO:0030976">
    <property type="term" value="F:thiamine pyrophosphate binding"/>
    <property type="evidence" value="ECO:0007669"/>
    <property type="project" value="UniProtKB-UniRule"/>
</dbReference>
<dbReference type="GO" id="GO:0009234">
    <property type="term" value="P:menaquinone biosynthetic process"/>
    <property type="evidence" value="ECO:0007669"/>
    <property type="project" value="UniProtKB-UniRule"/>
</dbReference>
<dbReference type="CDD" id="cd07037">
    <property type="entry name" value="TPP_PYR_MenD"/>
    <property type="match status" value="1"/>
</dbReference>
<dbReference type="CDD" id="cd02009">
    <property type="entry name" value="TPP_SHCHC_synthase"/>
    <property type="match status" value="1"/>
</dbReference>
<dbReference type="FunFam" id="3.40.50.970:FF:000066">
    <property type="entry name" value="2-succinyl-5-enolpyruvyl-6-hydroxy-3-cyclohexene-1-carboxylate synthase"/>
    <property type="match status" value="1"/>
</dbReference>
<dbReference type="Gene3D" id="3.40.50.970">
    <property type="match status" value="2"/>
</dbReference>
<dbReference type="Gene3D" id="3.40.50.1220">
    <property type="entry name" value="TPP-binding domain"/>
    <property type="match status" value="1"/>
</dbReference>
<dbReference type="HAMAP" id="MF_01659">
    <property type="entry name" value="MenD"/>
    <property type="match status" value="1"/>
</dbReference>
<dbReference type="InterPro" id="IPR004433">
    <property type="entry name" value="MenaQ_synth_MenD"/>
</dbReference>
<dbReference type="InterPro" id="IPR029061">
    <property type="entry name" value="THDP-binding"/>
</dbReference>
<dbReference type="InterPro" id="IPR012001">
    <property type="entry name" value="Thiamin_PyroP_enz_TPP-bd_dom"/>
</dbReference>
<dbReference type="NCBIfam" id="TIGR00173">
    <property type="entry name" value="menD"/>
    <property type="match status" value="1"/>
</dbReference>
<dbReference type="PANTHER" id="PTHR42916">
    <property type="entry name" value="2-SUCCINYL-5-ENOLPYRUVYL-6-HYDROXY-3-CYCLOHEXENE-1-CARBOXYLATE SYNTHASE"/>
    <property type="match status" value="1"/>
</dbReference>
<dbReference type="PANTHER" id="PTHR42916:SF1">
    <property type="entry name" value="PROTEIN PHYLLO, CHLOROPLASTIC"/>
    <property type="match status" value="1"/>
</dbReference>
<dbReference type="Pfam" id="PF02776">
    <property type="entry name" value="TPP_enzyme_N"/>
    <property type="match status" value="1"/>
</dbReference>
<dbReference type="PIRSF" id="PIRSF004983">
    <property type="entry name" value="MenD"/>
    <property type="match status" value="1"/>
</dbReference>
<dbReference type="SUPFAM" id="SSF52518">
    <property type="entry name" value="Thiamin diphosphate-binding fold (THDP-binding)"/>
    <property type="match status" value="2"/>
</dbReference>
<organism>
    <name type="scientific">Mycobacterium marinum (strain ATCC BAA-535 / M)</name>
    <dbReference type="NCBI Taxonomy" id="216594"/>
    <lineage>
        <taxon>Bacteria</taxon>
        <taxon>Bacillati</taxon>
        <taxon>Actinomycetota</taxon>
        <taxon>Actinomycetes</taxon>
        <taxon>Mycobacteriales</taxon>
        <taxon>Mycobacteriaceae</taxon>
        <taxon>Mycobacterium</taxon>
        <taxon>Mycobacterium ulcerans group</taxon>
    </lineage>
</organism>
<keyword id="KW-0460">Magnesium</keyword>
<keyword id="KW-0464">Manganese</keyword>
<keyword id="KW-0474">Menaquinone biosynthesis</keyword>
<keyword id="KW-0479">Metal-binding</keyword>
<keyword id="KW-1185">Reference proteome</keyword>
<keyword id="KW-0786">Thiamine pyrophosphate</keyword>
<keyword id="KW-0808">Transferase</keyword>
<proteinExistence type="inferred from homology"/>
<name>MEND_MYCMM</name>
<evidence type="ECO:0000255" key="1">
    <source>
        <dbReference type="HAMAP-Rule" id="MF_01659"/>
    </source>
</evidence>